<protein>
    <recommendedName>
        <fullName evidence="1">Sulfite reductase [NADPH] hemoprotein beta-component</fullName>
        <shortName evidence="1">SiR-HP</shortName>
        <shortName evidence="1">SiRHP</shortName>
        <ecNumber evidence="1">1.8.1.2</ecNumber>
    </recommendedName>
</protein>
<evidence type="ECO:0000255" key="1">
    <source>
        <dbReference type="HAMAP-Rule" id="MF_01540"/>
    </source>
</evidence>
<evidence type="ECO:0000305" key="2"/>
<feature type="chain" id="PRO_0000388531" description="Sulfite reductase [NADPH] hemoprotein beta-component">
    <location>
        <begin position="1"/>
        <end position="568"/>
    </location>
</feature>
<feature type="binding site" evidence="1">
    <location>
        <position position="425"/>
    </location>
    <ligand>
        <name>[4Fe-4S] cluster</name>
        <dbReference type="ChEBI" id="CHEBI:49883"/>
    </ligand>
</feature>
<feature type="binding site" evidence="1">
    <location>
        <position position="431"/>
    </location>
    <ligand>
        <name>[4Fe-4S] cluster</name>
        <dbReference type="ChEBI" id="CHEBI:49883"/>
    </ligand>
</feature>
<feature type="binding site" evidence="1">
    <location>
        <position position="470"/>
    </location>
    <ligand>
        <name>[4Fe-4S] cluster</name>
        <dbReference type="ChEBI" id="CHEBI:49883"/>
    </ligand>
</feature>
<feature type="binding site" evidence="1">
    <location>
        <position position="474"/>
    </location>
    <ligand>
        <name>[4Fe-4S] cluster</name>
        <dbReference type="ChEBI" id="CHEBI:49883"/>
    </ligand>
</feature>
<feature type="binding site" description="axial binding residue" evidence="1">
    <location>
        <position position="474"/>
    </location>
    <ligand>
        <name>siroheme</name>
        <dbReference type="ChEBI" id="CHEBI:60052"/>
    </ligand>
    <ligandPart>
        <name>Fe</name>
        <dbReference type="ChEBI" id="CHEBI:18248"/>
    </ligandPart>
</feature>
<gene>
    <name evidence="1" type="primary">cysI</name>
    <name type="ordered locus">XCV3448</name>
</gene>
<name>CYSI_XANE5</name>
<organism>
    <name type="scientific">Xanthomonas euvesicatoria pv. vesicatoria (strain 85-10)</name>
    <name type="common">Xanthomonas campestris pv. vesicatoria</name>
    <dbReference type="NCBI Taxonomy" id="316273"/>
    <lineage>
        <taxon>Bacteria</taxon>
        <taxon>Pseudomonadati</taxon>
        <taxon>Pseudomonadota</taxon>
        <taxon>Gammaproteobacteria</taxon>
        <taxon>Lysobacterales</taxon>
        <taxon>Lysobacteraceae</taxon>
        <taxon>Xanthomonas</taxon>
    </lineage>
</organism>
<accession>Q3BPY4</accession>
<keyword id="KW-0004">4Fe-4S</keyword>
<keyword id="KW-0028">Amino-acid biosynthesis</keyword>
<keyword id="KW-0198">Cysteine biosynthesis</keyword>
<keyword id="KW-0349">Heme</keyword>
<keyword id="KW-0408">Iron</keyword>
<keyword id="KW-0411">Iron-sulfur</keyword>
<keyword id="KW-0479">Metal-binding</keyword>
<keyword id="KW-0521">NADP</keyword>
<keyword id="KW-0560">Oxidoreductase</keyword>
<sequence length="568" mass="62383">MSHSVEDIKSESRRLRGSLQQSLADAVTGALREDDQTLIKYHGSYQQDDRDIRDERRRQKLEPAYQFMIRTRTPGGVITPTQWLALDGIATRYANHSLRVTTRQAFQFHGVIKRELKATMQAINATLIDTLAACGDVNRNVQVAANPLLSQAHATLYADAARVSEHLLPNTRAYYEIWLDEERVSGSGSEEEPIYGERYLPRKFKIGFAAPPLNDVDVFANDLGFIAILRDGQLLGYNVSIGGGMGASHGDAETWPRVANVIGFVTRDQLLDIATAVVTTQRDFGNRAVRKRARFKYTIDDHGLDTIVAEIARRAGFALQPAQPFAFDHNGDRYGWVEGEDGRWHLTLSLPAGRIADTDTAAHLSGLRAIAQLNVGEFRMTPNQNLVIAGVPASERARVDALVAQYALDAGNRAATALARGAMACVALPTCGLAMAEAERYLPDFSAALQPLLQQHGLADTPIVLRVSGCPNGCSRPYLAEMALVGKAPGRYNLMLGGDRRGQRLNTLYRENITEPEILAALQPLLARYASEGDHANDEGFGDFLHRAGVIALPPYPTHRRLDLELLA</sequence>
<comment type="function">
    <text evidence="1">Component of the sulfite reductase complex that catalyzes the 6-electron reduction of sulfite to sulfide. This is one of several activities required for the biosynthesis of L-cysteine from sulfate.</text>
</comment>
<comment type="catalytic activity">
    <reaction evidence="1">
        <text>hydrogen sulfide + 3 NADP(+) + 3 H2O = sulfite + 3 NADPH + 4 H(+)</text>
        <dbReference type="Rhea" id="RHEA:13801"/>
        <dbReference type="ChEBI" id="CHEBI:15377"/>
        <dbReference type="ChEBI" id="CHEBI:15378"/>
        <dbReference type="ChEBI" id="CHEBI:17359"/>
        <dbReference type="ChEBI" id="CHEBI:29919"/>
        <dbReference type="ChEBI" id="CHEBI:57783"/>
        <dbReference type="ChEBI" id="CHEBI:58349"/>
        <dbReference type="EC" id="1.8.1.2"/>
    </reaction>
</comment>
<comment type="cofactor">
    <cofactor evidence="1">
        <name>siroheme</name>
        <dbReference type="ChEBI" id="CHEBI:60052"/>
    </cofactor>
    <text evidence="1">Binds 1 siroheme per subunit.</text>
</comment>
<comment type="cofactor">
    <cofactor evidence="1">
        <name>[4Fe-4S] cluster</name>
        <dbReference type="ChEBI" id="CHEBI:49883"/>
    </cofactor>
    <text evidence="1">Binds 1 [4Fe-4S] cluster per subunit.</text>
</comment>
<comment type="pathway">
    <text evidence="1">Sulfur metabolism; hydrogen sulfide biosynthesis; hydrogen sulfide from sulfite (NADPH route): step 1/1.</text>
</comment>
<comment type="subunit">
    <text evidence="1">Alpha(8)-beta(8). The alpha component is a flavoprotein, the beta component is a hemoprotein.</text>
</comment>
<comment type="similarity">
    <text evidence="1">Belongs to the nitrite and sulfite reductase 4Fe-4S domain family.</text>
</comment>
<comment type="sequence caution" evidence="2">
    <conflict type="erroneous initiation">
        <sequence resource="EMBL-CDS" id="CAJ25179"/>
    </conflict>
</comment>
<proteinExistence type="inferred from homology"/>
<reference key="1">
    <citation type="journal article" date="2005" name="J. Bacteriol.">
        <title>Insights into genome plasticity and pathogenicity of the plant pathogenic Bacterium Xanthomonas campestris pv. vesicatoria revealed by the complete genome sequence.</title>
        <authorList>
            <person name="Thieme F."/>
            <person name="Koebnik R."/>
            <person name="Bekel T."/>
            <person name="Berger C."/>
            <person name="Boch J."/>
            <person name="Buettner D."/>
            <person name="Caldana C."/>
            <person name="Gaigalat L."/>
            <person name="Goesmann A."/>
            <person name="Kay S."/>
            <person name="Kirchner O."/>
            <person name="Lanz C."/>
            <person name="Linke B."/>
            <person name="McHardy A.C."/>
            <person name="Meyer F."/>
            <person name="Mittenhuber G."/>
            <person name="Nies D.H."/>
            <person name="Niesbach-Kloesgen U."/>
            <person name="Patschkowski T."/>
            <person name="Rueckert C."/>
            <person name="Rupp O."/>
            <person name="Schneiker S."/>
            <person name="Schuster S.C."/>
            <person name="Vorhoelter F.J."/>
            <person name="Weber E."/>
            <person name="Puehler A."/>
            <person name="Bonas U."/>
            <person name="Bartels D."/>
            <person name="Kaiser O."/>
        </authorList>
    </citation>
    <scope>NUCLEOTIDE SEQUENCE [LARGE SCALE GENOMIC DNA]</scope>
    <source>
        <strain>85-10</strain>
    </source>
</reference>
<dbReference type="EC" id="1.8.1.2" evidence="1"/>
<dbReference type="EMBL" id="AM039952">
    <property type="protein sequence ID" value="CAJ25179.1"/>
    <property type="status" value="ALT_INIT"/>
    <property type="molecule type" value="Genomic_DNA"/>
</dbReference>
<dbReference type="RefSeq" id="WP_029820156.1">
    <property type="nucleotide sequence ID" value="NZ_CP017190.1"/>
</dbReference>
<dbReference type="SMR" id="Q3BPY4"/>
<dbReference type="STRING" id="456327.BJD11_05495"/>
<dbReference type="GeneID" id="63992477"/>
<dbReference type="KEGG" id="xcv:XCV3448"/>
<dbReference type="eggNOG" id="COG0155">
    <property type="taxonomic scope" value="Bacteria"/>
</dbReference>
<dbReference type="HOGENOM" id="CLU_001975_3_2_6"/>
<dbReference type="UniPathway" id="UPA00140">
    <property type="reaction ID" value="UER00207"/>
</dbReference>
<dbReference type="Proteomes" id="UP000007069">
    <property type="component" value="Chromosome"/>
</dbReference>
<dbReference type="GO" id="GO:0009337">
    <property type="term" value="C:sulfite reductase complex (NADPH)"/>
    <property type="evidence" value="ECO:0007669"/>
    <property type="project" value="InterPro"/>
</dbReference>
<dbReference type="GO" id="GO:0051539">
    <property type="term" value="F:4 iron, 4 sulfur cluster binding"/>
    <property type="evidence" value="ECO:0007669"/>
    <property type="project" value="UniProtKB-KW"/>
</dbReference>
<dbReference type="GO" id="GO:0020037">
    <property type="term" value="F:heme binding"/>
    <property type="evidence" value="ECO:0007669"/>
    <property type="project" value="InterPro"/>
</dbReference>
<dbReference type="GO" id="GO:0046872">
    <property type="term" value="F:metal ion binding"/>
    <property type="evidence" value="ECO:0007669"/>
    <property type="project" value="UniProtKB-KW"/>
</dbReference>
<dbReference type="GO" id="GO:0050661">
    <property type="term" value="F:NADP binding"/>
    <property type="evidence" value="ECO:0007669"/>
    <property type="project" value="InterPro"/>
</dbReference>
<dbReference type="GO" id="GO:0050311">
    <property type="term" value="F:sulfite reductase (ferredoxin) activity"/>
    <property type="evidence" value="ECO:0007669"/>
    <property type="project" value="TreeGrafter"/>
</dbReference>
<dbReference type="GO" id="GO:0004783">
    <property type="term" value="F:sulfite reductase (NADPH) activity"/>
    <property type="evidence" value="ECO:0007669"/>
    <property type="project" value="UniProtKB-UniRule"/>
</dbReference>
<dbReference type="GO" id="GO:0019344">
    <property type="term" value="P:cysteine biosynthetic process"/>
    <property type="evidence" value="ECO:0007669"/>
    <property type="project" value="UniProtKB-KW"/>
</dbReference>
<dbReference type="GO" id="GO:0070814">
    <property type="term" value="P:hydrogen sulfide biosynthetic process"/>
    <property type="evidence" value="ECO:0007669"/>
    <property type="project" value="UniProtKB-UniRule"/>
</dbReference>
<dbReference type="GO" id="GO:0000103">
    <property type="term" value="P:sulfate assimilation"/>
    <property type="evidence" value="ECO:0007669"/>
    <property type="project" value="UniProtKB-UniRule"/>
</dbReference>
<dbReference type="FunFam" id="3.30.413.10:FF:000003">
    <property type="entry name" value="Sulfite reductase [NADPH] hemoprotein beta-component"/>
    <property type="match status" value="1"/>
</dbReference>
<dbReference type="Gene3D" id="3.30.413.10">
    <property type="entry name" value="Sulfite Reductase Hemoprotein, domain 1"/>
    <property type="match status" value="2"/>
</dbReference>
<dbReference type="HAMAP" id="MF_01540">
    <property type="entry name" value="CysI"/>
    <property type="match status" value="1"/>
</dbReference>
<dbReference type="InterPro" id="IPR011786">
    <property type="entry name" value="CysI"/>
</dbReference>
<dbReference type="InterPro" id="IPR005117">
    <property type="entry name" value="NiRdtase/SiRdtase_haem-b_fer"/>
</dbReference>
<dbReference type="InterPro" id="IPR036136">
    <property type="entry name" value="Nit/Sulf_reduc_fer-like_dom_sf"/>
</dbReference>
<dbReference type="InterPro" id="IPR006067">
    <property type="entry name" value="NO2/SO3_Rdtase_4Fe4S_dom"/>
</dbReference>
<dbReference type="InterPro" id="IPR045169">
    <property type="entry name" value="NO2/SO3_Rdtase_4Fe4S_prot"/>
</dbReference>
<dbReference type="InterPro" id="IPR045854">
    <property type="entry name" value="NO2/SO3_Rdtase_4Fe4S_sf"/>
</dbReference>
<dbReference type="InterPro" id="IPR006066">
    <property type="entry name" value="NO2/SO3_Rdtase_FeS/sirohaem_BS"/>
</dbReference>
<dbReference type="NCBIfam" id="TIGR02041">
    <property type="entry name" value="CysI"/>
    <property type="match status" value="1"/>
</dbReference>
<dbReference type="NCBIfam" id="NF010029">
    <property type="entry name" value="PRK13504.1"/>
    <property type="match status" value="1"/>
</dbReference>
<dbReference type="PANTHER" id="PTHR11493:SF47">
    <property type="entry name" value="SULFITE REDUCTASE [NADPH] SUBUNIT BETA"/>
    <property type="match status" value="1"/>
</dbReference>
<dbReference type="PANTHER" id="PTHR11493">
    <property type="entry name" value="SULFITE REDUCTASE [NADPH] SUBUNIT BETA-RELATED"/>
    <property type="match status" value="1"/>
</dbReference>
<dbReference type="Pfam" id="PF01077">
    <property type="entry name" value="NIR_SIR"/>
    <property type="match status" value="1"/>
</dbReference>
<dbReference type="Pfam" id="PF03460">
    <property type="entry name" value="NIR_SIR_ferr"/>
    <property type="match status" value="2"/>
</dbReference>
<dbReference type="PRINTS" id="PR00397">
    <property type="entry name" value="SIROHAEM"/>
</dbReference>
<dbReference type="SUPFAM" id="SSF56014">
    <property type="entry name" value="Nitrite and sulphite reductase 4Fe-4S domain-like"/>
    <property type="match status" value="2"/>
</dbReference>
<dbReference type="SUPFAM" id="SSF55124">
    <property type="entry name" value="Nitrite/Sulfite reductase N-terminal domain-like"/>
    <property type="match status" value="2"/>
</dbReference>
<dbReference type="PROSITE" id="PS00365">
    <property type="entry name" value="NIR_SIR"/>
    <property type="match status" value="1"/>
</dbReference>